<evidence type="ECO:0000250" key="1">
    <source>
        <dbReference type="UniProtKB" id="A0A384E138"/>
    </source>
</evidence>
<evidence type="ECO:0000250" key="2">
    <source>
        <dbReference type="UniProtKB" id="P14611"/>
    </source>
</evidence>
<evidence type="ECO:0000305" key="3"/>
<dbReference type="EC" id="2.3.1.9" evidence="1"/>
<dbReference type="EMBL" id="AE000666">
    <property type="protein sequence ID" value="AAB85293.1"/>
    <property type="molecule type" value="Genomic_DNA"/>
</dbReference>
<dbReference type="PIR" id="G69205">
    <property type="entry name" value="G69205"/>
</dbReference>
<dbReference type="RefSeq" id="WP_010876428.1">
    <property type="nucleotide sequence ID" value="NC_000916.1"/>
</dbReference>
<dbReference type="SMR" id="O26884"/>
<dbReference type="FunCoup" id="O26884">
    <property type="interactions" value="177"/>
</dbReference>
<dbReference type="IntAct" id="O26884">
    <property type="interactions" value="1"/>
</dbReference>
<dbReference type="STRING" id="187420.MTH_793"/>
<dbReference type="PaxDb" id="187420-MTH_793"/>
<dbReference type="EnsemblBacteria" id="AAB85293">
    <property type="protein sequence ID" value="AAB85293"/>
    <property type="gene ID" value="MTH_793"/>
</dbReference>
<dbReference type="KEGG" id="mth:MTH_793"/>
<dbReference type="PATRIC" id="fig|187420.15.peg.778"/>
<dbReference type="HOGENOM" id="CLU_035425_4_0_2"/>
<dbReference type="InParanoid" id="O26884"/>
<dbReference type="UniPathway" id="UPA00058">
    <property type="reaction ID" value="UER00101"/>
</dbReference>
<dbReference type="Proteomes" id="UP000005223">
    <property type="component" value="Chromosome"/>
</dbReference>
<dbReference type="GO" id="GO:0016747">
    <property type="term" value="F:acyltransferase activity, transferring groups other than amino-acyl groups"/>
    <property type="evidence" value="ECO:0007669"/>
    <property type="project" value="InterPro"/>
</dbReference>
<dbReference type="GO" id="GO:0008299">
    <property type="term" value="P:isoprenoid biosynthetic process"/>
    <property type="evidence" value="ECO:0007669"/>
    <property type="project" value="UniProtKB-KW"/>
</dbReference>
<dbReference type="CDD" id="cd00829">
    <property type="entry name" value="SCP-x_thiolase"/>
    <property type="match status" value="1"/>
</dbReference>
<dbReference type="Gene3D" id="3.40.47.10">
    <property type="match status" value="1"/>
</dbReference>
<dbReference type="InterPro" id="IPR002155">
    <property type="entry name" value="Thiolase"/>
</dbReference>
<dbReference type="InterPro" id="IPR016039">
    <property type="entry name" value="Thiolase-like"/>
</dbReference>
<dbReference type="InterPro" id="IPR055140">
    <property type="entry name" value="Thiolase_C_2"/>
</dbReference>
<dbReference type="InterPro" id="IPR020616">
    <property type="entry name" value="Thiolase_N"/>
</dbReference>
<dbReference type="NCBIfam" id="NF004720">
    <property type="entry name" value="PRK06064.1"/>
    <property type="match status" value="1"/>
</dbReference>
<dbReference type="PANTHER" id="PTHR42870">
    <property type="entry name" value="ACETYL-COA C-ACETYLTRANSFERASE"/>
    <property type="match status" value="1"/>
</dbReference>
<dbReference type="PANTHER" id="PTHR42870:SF6">
    <property type="entry name" value="ACETYL-COA C-ACYLTRANSFERASE"/>
    <property type="match status" value="1"/>
</dbReference>
<dbReference type="Pfam" id="PF22691">
    <property type="entry name" value="Thiolase_C_1"/>
    <property type="match status" value="1"/>
</dbReference>
<dbReference type="Pfam" id="PF00108">
    <property type="entry name" value="Thiolase_N"/>
    <property type="match status" value="1"/>
</dbReference>
<dbReference type="PIRSF" id="PIRSF000429">
    <property type="entry name" value="Ac-CoA_Ac_transf"/>
    <property type="match status" value="1"/>
</dbReference>
<dbReference type="SUPFAM" id="SSF53901">
    <property type="entry name" value="Thiolase-like"/>
    <property type="match status" value="2"/>
</dbReference>
<organism>
    <name type="scientific">Methanothermobacter thermautotrophicus (strain ATCC 29096 / DSM 1053 / JCM 10044 / NBRC 100330 / Delta H)</name>
    <name type="common">Methanobacterium thermoautotrophicum</name>
    <dbReference type="NCBI Taxonomy" id="187420"/>
    <lineage>
        <taxon>Archaea</taxon>
        <taxon>Methanobacteriati</taxon>
        <taxon>Methanobacteriota</taxon>
        <taxon>Methanomada group</taxon>
        <taxon>Methanobacteria</taxon>
        <taxon>Methanobacteriales</taxon>
        <taxon>Methanobacteriaceae</taxon>
        <taxon>Methanothermobacter</taxon>
    </lineage>
</organism>
<proteinExistence type="inferred from homology"/>
<name>THIOL_METTH</name>
<sequence length="383" mass="40501">MRDVAVIGVSQTKFGELWDVSFRDMITEAGLGAIEDAGVEGADLDAMYVGNMSAGLFIKQEHISSLIADHAGLTPIPSTRVEAACASGGLALRSGIMAVASGYHDIVIAAGVEKMTDVVDPTPAIATASDQEWEAQQGVTFPSLYAMMARRHMYEYGTTREQLAMVSVINHENASNNPRAQFPMKVTVEQVMNSTMVADPLRLLDCSPISDGAAAVILCPADMAREYTDTPVYVKASAQASGTIALHDRRDITRIDATVNAARNAFKMAKLTPGDIDLVEVHDCFSINGILAVEDLGFVEKGEGGRAFEDGMTRIDGDIPVNPSGGLKARGHPLGATGIAQAAEVVWQLRGEAGKRQVEGAEIGMTHNIGGTGGTAAVHIFSR</sequence>
<feature type="chain" id="PRO_0000107403" description="Acetyl-CoA acetyltransferase">
    <location>
        <begin position="1"/>
        <end position="383"/>
    </location>
</feature>
<feature type="active site" description="Acyl-thioester intermediate" evidence="2">
    <location>
        <position position="85"/>
    </location>
</feature>
<feature type="active site" description="Proton acceptor" evidence="2">
    <location>
        <position position="332"/>
    </location>
</feature>
<feature type="binding site" evidence="1">
    <location>
        <position position="206"/>
    </location>
    <ligand>
        <name>CoA</name>
        <dbReference type="ChEBI" id="CHEBI:57287"/>
        <note>ligand shared with HMG-CoA synthase</note>
    </ligand>
</feature>
<feature type="binding site" evidence="1">
    <location>
        <position position="207"/>
    </location>
    <ligand>
        <name>CoA</name>
        <dbReference type="ChEBI" id="CHEBI:57287"/>
        <note>ligand shared with HMG-CoA synthase</note>
    </ligand>
</feature>
<feature type="binding site" evidence="1">
    <location>
        <position position="209"/>
    </location>
    <ligand>
        <name>CoA</name>
        <dbReference type="ChEBI" id="CHEBI:57287"/>
        <note>ligand shared with HMG-CoA synthase</note>
    </ligand>
</feature>
<feature type="binding site" evidence="1">
    <location>
        <position position="328"/>
    </location>
    <ligand>
        <name>CoA</name>
        <dbReference type="ChEBI" id="CHEBI:57287"/>
        <note>ligand shared with HMG-CoA synthase</note>
    </ligand>
</feature>
<reference key="1">
    <citation type="journal article" date="1997" name="J. Bacteriol.">
        <title>Complete genome sequence of Methanobacterium thermoautotrophicum deltaH: functional analysis and comparative genomics.</title>
        <authorList>
            <person name="Smith D.R."/>
            <person name="Doucette-Stamm L.A."/>
            <person name="Deloughery C."/>
            <person name="Lee H.-M."/>
            <person name="Dubois J."/>
            <person name="Aldredge T."/>
            <person name="Bashirzadeh R."/>
            <person name="Blakely D."/>
            <person name="Cook R."/>
            <person name="Gilbert K."/>
            <person name="Harrison D."/>
            <person name="Hoang L."/>
            <person name="Keagle P."/>
            <person name="Lumm W."/>
            <person name="Pothier B."/>
            <person name="Qiu D."/>
            <person name="Spadafora R."/>
            <person name="Vicare R."/>
            <person name="Wang Y."/>
            <person name="Wierzbowski J."/>
            <person name="Gibson R."/>
            <person name="Jiwani N."/>
            <person name="Caruso A."/>
            <person name="Bush D."/>
            <person name="Safer H."/>
            <person name="Patwell D."/>
            <person name="Prabhakar S."/>
            <person name="McDougall S."/>
            <person name="Shimer G."/>
            <person name="Goyal A."/>
            <person name="Pietrovski S."/>
            <person name="Church G.M."/>
            <person name="Daniels C.J."/>
            <person name="Mao J.-I."/>
            <person name="Rice P."/>
            <person name="Noelling J."/>
            <person name="Reeve J.N."/>
        </authorList>
    </citation>
    <scope>NUCLEOTIDE SEQUENCE [LARGE SCALE GENOMIC DNA]</scope>
    <source>
        <strain>ATCC 29096 / DSM 1053 / JCM 10044 / NBRC 100330 / Delta H</strain>
    </source>
</reference>
<gene>
    <name type="ordered locus">MTH_793</name>
</gene>
<accession>O26884</accession>
<keyword id="KW-0012">Acyltransferase</keyword>
<keyword id="KW-0414">Isoprene biosynthesis</keyword>
<keyword id="KW-1185">Reference proteome</keyword>
<keyword id="KW-0808">Transferase</keyword>
<protein>
    <recommendedName>
        <fullName evidence="3">Acetyl-CoA acetyltransferase</fullName>
        <ecNumber evidence="1">2.3.1.9</ecNumber>
    </recommendedName>
    <alternativeName>
        <fullName evidence="3">Acetoacetyl-CoA thiolase</fullName>
    </alternativeName>
</protein>
<comment type="function">
    <text evidence="1">Catalyzes the condensation of two acetyl-coA molecules into acetoacetyl-CoA. Functions in the mevalonate (MVA) pathway leading to isopentenyl diphosphate (IPP), a key precursor for the biosynthesis of isoprenoid compounds that are building blocks of archaeal membrane lipids.</text>
</comment>
<comment type="catalytic activity">
    <reaction evidence="1">
        <text>2 acetyl-CoA = acetoacetyl-CoA + CoA</text>
        <dbReference type="Rhea" id="RHEA:21036"/>
        <dbReference type="ChEBI" id="CHEBI:57286"/>
        <dbReference type="ChEBI" id="CHEBI:57287"/>
        <dbReference type="ChEBI" id="CHEBI:57288"/>
        <dbReference type="EC" id="2.3.1.9"/>
    </reaction>
    <physiologicalReaction direction="left-to-right" evidence="1">
        <dbReference type="Rhea" id="RHEA:21037"/>
    </physiologicalReaction>
</comment>
<comment type="pathway">
    <text evidence="1">Metabolic intermediate biosynthesis; (R)-mevalonate biosynthesis; (R)-mevalonate from acetyl-CoA: step 1/3.</text>
</comment>
<comment type="subunit">
    <text evidence="1">Interacts with HMG-CoA synthase (HMGCS) that catalyzes the second step in the pathway and with a DUF35 protein. The acetoacetyl-CoA thiolase/HMG-CoA synthase complex channels the intermediate via a fused CoA-binding site, which allows for efficient coupling of the endergonic thiolase reaction with the exergonic HMGCS reaction.</text>
</comment>
<comment type="similarity">
    <text evidence="3">Belongs to the thiolase-like superfamily. Thiolase family.</text>
</comment>